<dbReference type="EMBL" id="AJ618981">
    <property type="protein sequence ID" value="CAF02065.1"/>
    <property type="molecule type" value="mRNA"/>
</dbReference>
<dbReference type="RefSeq" id="XP_032257066.1">
    <property type="nucleotide sequence ID" value="XM_032401175.1"/>
</dbReference>
<dbReference type="SMR" id="Q706D1"/>
<dbReference type="GeneID" id="116630440"/>
<dbReference type="GO" id="GO:0005615">
    <property type="term" value="C:extracellular space"/>
    <property type="evidence" value="ECO:0007669"/>
    <property type="project" value="TreeGrafter"/>
</dbReference>
<dbReference type="GO" id="GO:0005179">
    <property type="term" value="F:hormone activity"/>
    <property type="evidence" value="ECO:0007669"/>
    <property type="project" value="InterPro"/>
</dbReference>
<dbReference type="GO" id="GO:0051428">
    <property type="term" value="F:peptide hormone receptor binding"/>
    <property type="evidence" value="ECO:0007669"/>
    <property type="project" value="TreeGrafter"/>
</dbReference>
<dbReference type="GO" id="GO:1990051">
    <property type="term" value="P:activation of protein kinase C activity"/>
    <property type="evidence" value="ECO:0000250"/>
    <property type="project" value="UniProtKB"/>
</dbReference>
<dbReference type="GO" id="GO:0098868">
    <property type="term" value="P:bone growth"/>
    <property type="evidence" value="ECO:0000250"/>
    <property type="project" value="UniProtKB"/>
</dbReference>
<dbReference type="GO" id="GO:0044320">
    <property type="term" value="P:cellular response to leptin stimulus"/>
    <property type="evidence" value="ECO:0000250"/>
    <property type="project" value="UniProtKB"/>
</dbReference>
<dbReference type="GO" id="GO:0006112">
    <property type="term" value="P:energy reserve metabolic process"/>
    <property type="evidence" value="ECO:0007669"/>
    <property type="project" value="TreeGrafter"/>
</dbReference>
<dbReference type="GO" id="GO:0050892">
    <property type="term" value="P:intestinal absorption"/>
    <property type="evidence" value="ECO:0000250"/>
    <property type="project" value="UniProtKB"/>
</dbReference>
<dbReference type="GO" id="GO:0033210">
    <property type="term" value="P:leptin-mediated signaling pathway"/>
    <property type="evidence" value="ECO:0000250"/>
    <property type="project" value="UniProtKB"/>
</dbReference>
<dbReference type="GO" id="GO:0006629">
    <property type="term" value="P:lipid metabolic process"/>
    <property type="evidence" value="ECO:0007669"/>
    <property type="project" value="TreeGrafter"/>
</dbReference>
<dbReference type="GO" id="GO:0038108">
    <property type="term" value="P:negative regulation of appetite by leptin-mediated signaling pathway"/>
    <property type="evidence" value="ECO:0000250"/>
    <property type="project" value="UniProtKB"/>
</dbReference>
<dbReference type="GO" id="GO:0010507">
    <property type="term" value="P:negative regulation of autophagy"/>
    <property type="evidence" value="ECO:0000250"/>
    <property type="project" value="UniProtKB"/>
</dbReference>
<dbReference type="GO" id="GO:0046325">
    <property type="term" value="P:negative regulation of D-glucose import"/>
    <property type="evidence" value="ECO:0000250"/>
    <property type="project" value="UniProtKB"/>
</dbReference>
<dbReference type="GO" id="GO:0006909">
    <property type="term" value="P:phagocytosis"/>
    <property type="evidence" value="ECO:0000250"/>
    <property type="project" value="UniProtKB"/>
</dbReference>
<dbReference type="GO" id="GO:0032735">
    <property type="term" value="P:positive regulation of interleukin-12 production"/>
    <property type="evidence" value="ECO:0000250"/>
    <property type="project" value="UniProtKB"/>
</dbReference>
<dbReference type="GO" id="GO:0032755">
    <property type="term" value="P:positive regulation of interleukin-6 production"/>
    <property type="evidence" value="ECO:0000250"/>
    <property type="project" value="UniProtKB"/>
</dbReference>
<dbReference type="GO" id="GO:0032757">
    <property type="term" value="P:positive regulation of interleukin-8 production"/>
    <property type="evidence" value="ECO:0000250"/>
    <property type="project" value="UniProtKB"/>
</dbReference>
<dbReference type="GO" id="GO:0043410">
    <property type="term" value="P:positive regulation of MAPK cascade"/>
    <property type="evidence" value="ECO:0000250"/>
    <property type="project" value="UniProtKB"/>
</dbReference>
<dbReference type="GO" id="GO:1900745">
    <property type="term" value="P:positive regulation of p38MAPK cascade"/>
    <property type="evidence" value="ECO:0000250"/>
    <property type="project" value="UniProtKB"/>
</dbReference>
<dbReference type="GO" id="GO:0051897">
    <property type="term" value="P:positive regulation of phosphatidylinositol 3-kinase/protein kinase B signal transduction"/>
    <property type="evidence" value="ECO:0000250"/>
    <property type="project" value="UniProtKB"/>
</dbReference>
<dbReference type="GO" id="GO:0046427">
    <property type="term" value="P:positive regulation of receptor signaling pathway via JAK-STAT"/>
    <property type="evidence" value="ECO:0000250"/>
    <property type="project" value="UniProtKB"/>
</dbReference>
<dbReference type="GO" id="GO:0042102">
    <property type="term" value="P:positive regulation of T cell proliferation"/>
    <property type="evidence" value="ECO:0000250"/>
    <property type="project" value="UniProtKB"/>
</dbReference>
<dbReference type="GO" id="GO:0032008">
    <property type="term" value="P:positive regulation of TOR signaling"/>
    <property type="evidence" value="ECO:0000250"/>
    <property type="project" value="UniProtKB"/>
</dbReference>
<dbReference type="GO" id="GO:0032760">
    <property type="term" value="P:positive regulation of tumor necrosis factor production"/>
    <property type="evidence" value="ECO:0000250"/>
    <property type="project" value="UniProtKB"/>
</dbReference>
<dbReference type="GO" id="GO:0032310">
    <property type="term" value="P:prostaglandin secretion"/>
    <property type="evidence" value="ECO:0000250"/>
    <property type="project" value="UniProtKB"/>
</dbReference>
<dbReference type="GO" id="GO:0045765">
    <property type="term" value="P:regulation of angiogenesis"/>
    <property type="evidence" value="ECO:0000250"/>
    <property type="project" value="UniProtKB"/>
</dbReference>
<dbReference type="GO" id="GO:0046850">
    <property type="term" value="P:regulation of bone remodeling"/>
    <property type="evidence" value="ECO:0000250"/>
    <property type="project" value="UniProtKB"/>
</dbReference>
<dbReference type="GO" id="GO:0090335">
    <property type="term" value="P:regulation of brown fat cell differentiation"/>
    <property type="evidence" value="ECO:0000250"/>
    <property type="project" value="UniProtKB"/>
</dbReference>
<dbReference type="GO" id="GO:0051726">
    <property type="term" value="P:regulation of cell cycle"/>
    <property type="evidence" value="ECO:0000250"/>
    <property type="project" value="UniProtKB"/>
</dbReference>
<dbReference type="GO" id="GO:1900015">
    <property type="term" value="P:regulation of cytokine production involved in inflammatory response"/>
    <property type="evidence" value="ECO:0000250"/>
    <property type="project" value="UniProtKB"/>
</dbReference>
<dbReference type="GO" id="GO:0001936">
    <property type="term" value="P:regulation of endothelial cell proliferation"/>
    <property type="evidence" value="ECO:0000250"/>
    <property type="project" value="UniProtKB"/>
</dbReference>
<dbReference type="GO" id="GO:0032814">
    <property type="term" value="P:regulation of natural killer cell activation"/>
    <property type="evidence" value="ECO:0000250"/>
    <property type="project" value="UniProtKB"/>
</dbReference>
<dbReference type="GO" id="GO:0042269">
    <property type="term" value="P:regulation of natural killer cell mediated cytotoxicity"/>
    <property type="evidence" value="ECO:0000250"/>
    <property type="project" value="UniProtKB"/>
</dbReference>
<dbReference type="GO" id="GO:0032817">
    <property type="term" value="P:regulation of natural killer cell proliferation"/>
    <property type="evidence" value="ECO:0000250"/>
    <property type="project" value="UniProtKB"/>
</dbReference>
<dbReference type="GO" id="GO:0050999">
    <property type="term" value="P:regulation of nitric-oxide synthase activity"/>
    <property type="evidence" value="ECO:0000250"/>
    <property type="project" value="UniProtKB"/>
</dbReference>
<dbReference type="GO" id="GO:0032868">
    <property type="term" value="P:response to insulin"/>
    <property type="evidence" value="ECO:0007669"/>
    <property type="project" value="TreeGrafter"/>
</dbReference>
<dbReference type="GO" id="GO:0019953">
    <property type="term" value="P:sexual reproduction"/>
    <property type="evidence" value="ECO:0000250"/>
    <property type="project" value="UniProtKB"/>
</dbReference>
<dbReference type="GO" id="GO:0030217">
    <property type="term" value="P:T cell differentiation"/>
    <property type="evidence" value="ECO:0000250"/>
    <property type="project" value="UniProtKB"/>
</dbReference>
<dbReference type="FunFam" id="1.20.1250.10:FF:000008">
    <property type="entry name" value="Leptin"/>
    <property type="match status" value="1"/>
</dbReference>
<dbReference type="Gene3D" id="1.20.1250.10">
    <property type="match status" value="1"/>
</dbReference>
<dbReference type="InterPro" id="IPR009079">
    <property type="entry name" value="4_helix_cytokine-like_core"/>
</dbReference>
<dbReference type="InterPro" id="IPR000065">
    <property type="entry name" value="Leptin"/>
</dbReference>
<dbReference type="PANTHER" id="PTHR11724">
    <property type="entry name" value="LEPTIN"/>
    <property type="match status" value="1"/>
</dbReference>
<dbReference type="PANTHER" id="PTHR11724:SF1">
    <property type="entry name" value="LEPTIN"/>
    <property type="match status" value="1"/>
</dbReference>
<dbReference type="Pfam" id="PF02024">
    <property type="entry name" value="Leptin"/>
    <property type="match status" value="1"/>
</dbReference>
<dbReference type="PIRSF" id="PIRSF001837">
    <property type="entry name" value="Leptin"/>
    <property type="match status" value="1"/>
</dbReference>
<dbReference type="PRINTS" id="PR00495">
    <property type="entry name" value="LEPTIN"/>
</dbReference>
<dbReference type="SUPFAM" id="SSF47266">
    <property type="entry name" value="4-helical cytokines"/>
    <property type="match status" value="1"/>
</dbReference>
<reference key="1">
    <citation type="submission" date="2003-12" db="EMBL/GenBank/DDBJ databases">
        <title>Cloning phocid seal leptin and its tissue specific expression.</title>
        <authorList>
            <person name="Hammond J.A."/>
            <person name="Hall A.J."/>
        </authorList>
    </citation>
    <scope>NUCLEOTIDE SEQUENCE [MRNA]</scope>
    <source>
        <tissue>Blubber</tissue>
    </source>
</reference>
<gene>
    <name type="primary">LEP</name>
    <name type="synonym">OB</name>
</gene>
<accession>Q706D1</accession>
<organism>
    <name type="scientific">Phoca vitulina</name>
    <name type="common">Harbor seal</name>
    <dbReference type="NCBI Taxonomy" id="9720"/>
    <lineage>
        <taxon>Eukaryota</taxon>
        <taxon>Metazoa</taxon>
        <taxon>Chordata</taxon>
        <taxon>Craniata</taxon>
        <taxon>Vertebrata</taxon>
        <taxon>Euteleostomi</taxon>
        <taxon>Mammalia</taxon>
        <taxon>Eutheria</taxon>
        <taxon>Laurasiatheria</taxon>
        <taxon>Carnivora</taxon>
        <taxon>Caniformia</taxon>
        <taxon>Pinnipedia</taxon>
        <taxon>Phocidae</taxon>
        <taxon>Phocinae</taxon>
        <taxon>Phoca</taxon>
    </lineage>
</organism>
<comment type="function">
    <text evidence="2 3 4">Key player in the regulation of energy balance and body weight control. Once released into the circulation, has central and peripheral effects by binding LEPR, found in many tissues, which results in the activation of several major signaling pathways (By similarity). In the hypothalamus, acts as an appetite-regulating factor that induces a decrease in food intake and an increase in energy consumption by inducing anorexinogenic factors and suppressing orexigenic neuropeptides, also regulates bone mass and secretion of hypothalamo-pituitary-adrenal hormones. In the periphery, increases basal metabolism, influences reproductive function, regulates pancreatic beta-cell function and insulin secretion, is pro-angiogenic for endothelial cell and affects innate and adaptive immunity (By similarity). In the arcuate nucleus of the hypothalamus, activates by depolarization POMC neurons inducing FOS and SOCS3 expression to release anorexigenic peptides and inhibits by hyperpolarization NPY neurons inducing SOCS3 with a consequent reduction on release of orexigenic peptides (By similarity). In addition to its known satiety inducing effect, has a modulatory role in nutrient absorption. In the intestine, reduces glucose absorption by enterocytes by activating PKC and leading to a sequential activation of p38, PI3K and ERK signaling pathways which exerts an inhibitory effect on glucose absorption (By similarity). Acts as a growth factor on certain tissues, through the activation of different signaling pathways increases expression of genes involved in cell cycle regulation such as CCND1, via JAK2-STAT3 pathway, or VEGFA, via MAPK1/3 and PI3K-AKT1 pathways (By similarity). May also play an apoptotic role via JAK2-STAT3 pathway and up-regulation of BIRC5 expression. Pro-angiogenic, has mitogenic activity on vascular endothelial cells and plays a role in matrix remodeling by regulating the expression of matrix metalloproteinases (MMPs) and tissue inhibitors of metalloproteinases (TIMPs). In innate immunity, modulates the activity and function of neutrophils by increasing chemotaxis and the secretion of oxygen radicals. Increases phagocytosis by macrophages and enhances secretion of pro-inflammatory mediators. Increases cytotoxic ability of NK cells. Plays a pro-inflammatory role, in synergy with IL1B, by inducing NOS2 which promotes the production of IL6, IL8 and Prostaglandin E2, through a signaling pathway that involves JAK2, PI3K, MAP2K1/MEK1 and MAPK14/p38 (By similarity). In adaptive immunity, promotes the switch of memory T-cells towards T helper-1 cell immune responses (By similarity). Increases CD4(+)CD25(-) T-cell proliferation and reduces autophagy during TCR (T-cell receptor) stimulation, through MTOR signaling pathway activation and BCL2 up-regulation (By similarity).</text>
</comment>
<comment type="subcellular location">
    <subcellularLocation>
        <location evidence="2">Secreted</location>
    </subcellularLocation>
</comment>
<comment type="similarity">
    <text evidence="6">Belongs to the leptin family.</text>
</comment>
<evidence type="ECO:0000250" key="1"/>
<evidence type="ECO:0000250" key="2">
    <source>
        <dbReference type="UniProtKB" id="P41159"/>
    </source>
</evidence>
<evidence type="ECO:0000250" key="3">
    <source>
        <dbReference type="UniProtKB" id="P41160"/>
    </source>
</evidence>
<evidence type="ECO:0000250" key="4">
    <source>
        <dbReference type="UniProtKB" id="P50596"/>
    </source>
</evidence>
<evidence type="ECO:0000255" key="5"/>
<evidence type="ECO:0000305" key="6"/>
<name>LEP_PHOVI</name>
<proteinExistence type="evidence at transcript level"/>
<keyword id="KW-1015">Disulfide bond</keyword>
<keyword id="KW-0550">Obesity</keyword>
<keyword id="KW-0964">Secreted</keyword>
<keyword id="KW-0732">Signal</keyword>
<feature type="signal peptide" evidence="5">
    <location>
        <begin position="1"/>
        <end position="21"/>
    </location>
</feature>
<feature type="chain" id="PRO_0000017688" description="Leptin">
    <location>
        <begin position="22"/>
        <end position="167"/>
    </location>
</feature>
<feature type="disulfide bond" evidence="1">
    <location>
        <begin position="117"/>
        <end position="167"/>
    </location>
</feature>
<sequence length="167" mass="18411">MRCGSLCRFLWLWSCLSYIEAVPIQRVQDDTKTLIKTIITRINDISPPQGVCSRPRVAGLDFIPRVQSVRTLSGMDQILATYQQILTSLQSRSVVQIANDLANLRALLRLLASAKSCPVPRARGSDTIKGLGNVLRASVHSAEVVALSRLKAALQDMLRQLDRNPGC</sequence>
<protein>
    <recommendedName>
        <fullName>Leptin</fullName>
    </recommendedName>
    <alternativeName>
        <fullName>Obesity factor</fullName>
    </alternativeName>
</protein>